<feature type="chain" id="PRO_1000187996" description="Ribonuclease Z">
    <location>
        <begin position="1"/>
        <end position="309"/>
    </location>
</feature>
<feature type="active site" description="Proton acceptor" evidence="1">
    <location>
        <position position="67"/>
    </location>
</feature>
<feature type="binding site" evidence="1">
    <location>
        <position position="63"/>
    </location>
    <ligand>
        <name>Zn(2+)</name>
        <dbReference type="ChEBI" id="CHEBI:29105"/>
        <label>1</label>
        <note>catalytic</note>
    </ligand>
</feature>
<feature type="binding site" evidence="1">
    <location>
        <position position="65"/>
    </location>
    <ligand>
        <name>Zn(2+)</name>
        <dbReference type="ChEBI" id="CHEBI:29105"/>
        <label>1</label>
        <note>catalytic</note>
    </ligand>
</feature>
<feature type="binding site" evidence="1">
    <location>
        <position position="67"/>
    </location>
    <ligand>
        <name>Zn(2+)</name>
        <dbReference type="ChEBI" id="CHEBI:29105"/>
        <label>2</label>
        <note>catalytic</note>
    </ligand>
</feature>
<feature type="binding site" evidence="1">
    <location>
        <position position="68"/>
    </location>
    <ligand>
        <name>Zn(2+)</name>
        <dbReference type="ChEBI" id="CHEBI:29105"/>
        <label>2</label>
        <note>catalytic</note>
    </ligand>
</feature>
<feature type="binding site" evidence="1">
    <location>
        <position position="145"/>
    </location>
    <ligand>
        <name>Zn(2+)</name>
        <dbReference type="ChEBI" id="CHEBI:29105"/>
        <label>1</label>
        <note>catalytic</note>
    </ligand>
</feature>
<feature type="binding site" evidence="1">
    <location>
        <position position="216"/>
    </location>
    <ligand>
        <name>Zn(2+)</name>
        <dbReference type="ChEBI" id="CHEBI:29105"/>
        <label>1</label>
        <note>catalytic</note>
    </ligand>
</feature>
<feature type="binding site" evidence="1">
    <location>
        <position position="216"/>
    </location>
    <ligand>
        <name>Zn(2+)</name>
        <dbReference type="ChEBI" id="CHEBI:29105"/>
        <label>2</label>
        <note>catalytic</note>
    </ligand>
</feature>
<feature type="binding site" evidence="1">
    <location>
        <position position="274"/>
    </location>
    <ligand>
        <name>Zn(2+)</name>
        <dbReference type="ChEBI" id="CHEBI:29105"/>
        <label>2</label>
        <note>catalytic</note>
    </ligand>
</feature>
<gene>
    <name evidence="1" type="primary">rnz</name>
    <name type="ordered locus">Spy49_0733</name>
</gene>
<keyword id="KW-0255">Endonuclease</keyword>
<keyword id="KW-0378">Hydrolase</keyword>
<keyword id="KW-0479">Metal-binding</keyword>
<keyword id="KW-0540">Nuclease</keyword>
<keyword id="KW-0819">tRNA processing</keyword>
<keyword id="KW-0862">Zinc</keyword>
<sequence>MELQFLGTGAGQPAKQRNVSSLALKLLDEINEVWMFDCGEGTQRQILETTIKPRKIRKIFITHLHGDHIFGLPGFLSSRSFQASEEQTDLDIYGPIGIKTYVLTSLKVSGARVPYQIHFHEFDDKSLGKIMETDKFVVYAERLAHTIFCMGYRVVQKDLEGTLDAEALKAAGVPFGPLFGKIKNGQDVELEDGRLICAKDYISAPKKGKIITIIGDTRKTSASVKLAKDADVLVHESTYGKGDERIARNHGHSTNMQAAQIAHEAGAKRLLLNHVSARFLGRDCRQMEKDAATIFENVKMVQDLEEVII</sequence>
<dbReference type="EC" id="3.1.26.11" evidence="1"/>
<dbReference type="EMBL" id="CP000829">
    <property type="protein sequence ID" value="ACI61048.1"/>
    <property type="molecule type" value="Genomic_DNA"/>
</dbReference>
<dbReference type="SMR" id="B5XL36"/>
<dbReference type="KEGG" id="soz:Spy49_0733"/>
<dbReference type="HOGENOM" id="CLU_031317_2_0_9"/>
<dbReference type="Proteomes" id="UP000001039">
    <property type="component" value="Chromosome"/>
</dbReference>
<dbReference type="GO" id="GO:0042781">
    <property type="term" value="F:3'-tRNA processing endoribonuclease activity"/>
    <property type="evidence" value="ECO:0007669"/>
    <property type="project" value="UniProtKB-UniRule"/>
</dbReference>
<dbReference type="GO" id="GO:0008270">
    <property type="term" value="F:zinc ion binding"/>
    <property type="evidence" value="ECO:0007669"/>
    <property type="project" value="UniProtKB-UniRule"/>
</dbReference>
<dbReference type="CDD" id="cd07717">
    <property type="entry name" value="RNaseZ_ZiPD-like_MBL-fold"/>
    <property type="match status" value="1"/>
</dbReference>
<dbReference type="FunFam" id="3.60.15.10:FF:000002">
    <property type="entry name" value="Ribonuclease Z"/>
    <property type="match status" value="1"/>
</dbReference>
<dbReference type="Gene3D" id="3.60.15.10">
    <property type="entry name" value="Ribonuclease Z/Hydroxyacylglutathione hydrolase-like"/>
    <property type="match status" value="1"/>
</dbReference>
<dbReference type="HAMAP" id="MF_01818">
    <property type="entry name" value="RNase_Z_BN"/>
    <property type="match status" value="1"/>
</dbReference>
<dbReference type="InterPro" id="IPR001279">
    <property type="entry name" value="Metallo-B-lactamas"/>
</dbReference>
<dbReference type="InterPro" id="IPR036866">
    <property type="entry name" value="RibonucZ/Hydroxyglut_hydro"/>
</dbReference>
<dbReference type="InterPro" id="IPR013471">
    <property type="entry name" value="RNase_Z/BN"/>
</dbReference>
<dbReference type="NCBIfam" id="NF000801">
    <property type="entry name" value="PRK00055.1-3"/>
    <property type="match status" value="1"/>
</dbReference>
<dbReference type="NCBIfam" id="TIGR02651">
    <property type="entry name" value="RNase_Z"/>
    <property type="match status" value="1"/>
</dbReference>
<dbReference type="PANTHER" id="PTHR46018">
    <property type="entry name" value="ZINC PHOSPHODIESTERASE ELAC PROTEIN 1"/>
    <property type="match status" value="1"/>
</dbReference>
<dbReference type="PANTHER" id="PTHR46018:SF2">
    <property type="entry name" value="ZINC PHOSPHODIESTERASE ELAC PROTEIN 1"/>
    <property type="match status" value="1"/>
</dbReference>
<dbReference type="Pfam" id="PF00753">
    <property type="entry name" value="Lactamase_B"/>
    <property type="match status" value="1"/>
</dbReference>
<dbReference type="SUPFAM" id="SSF56281">
    <property type="entry name" value="Metallo-hydrolase/oxidoreductase"/>
    <property type="match status" value="1"/>
</dbReference>
<proteinExistence type="inferred from homology"/>
<comment type="function">
    <text evidence="1">Zinc phosphodiesterase, which displays some tRNA 3'-processing endonuclease activity. Probably involved in tRNA maturation, by removing a 3'-trailer from precursor tRNA.</text>
</comment>
<comment type="catalytic activity">
    <reaction evidence="1">
        <text>Endonucleolytic cleavage of RNA, removing extra 3' nucleotides from tRNA precursor, generating 3' termini of tRNAs. A 3'-hydroxy group is left at the tRNA terminus and a 5'-phosphoryl group is left at the trailer molecule.</text>
        <dbReference type="EC" id="3.1.26.11"/>
    </reaction>
</comment>
<comment type="cofactor">
    <cofactor evidence="1">
        <name>Zn(2+)</name>
        <dbReference type="ChEBI" id="CHEBI:29105"/>
    </cofactor>
    <text evidence="1">Binds 2 Zn(2+) ions.</text>
</comment>
<comment type="subunit">
    <text evidence="1">Homodimer.</text>
</comment>
<comment type="similarity">
    <text evidence="1">Belongs to the RNase Z family.</text>
</comment>
<reference key="1">
    <citation type="journal article" date="2008" name="J. Bacteriol.">
        <title>Genome sequence of a nephritogenic and highly transformable M49 strain of Streptococcus pyogenes.</title>
        <authorList>
            <person name="McShan W.M."/>
            <person name="Ferretti J.J."/>
            <person name="Karasawa T."/>
            <person name="Suvorov A.N."/>
            <person name="Lin S."/>
            <person name="Qin B."/>
            <person name="Jia H."/>
            <person name="Kenton S."/>
            <person name="Najar F."/>
            <person name="Wu H."/>
            <person name="Scott J."/>
            <person name="Roe B.A."/>
            <person name="Savic D.J."/>
        </authorList>
    </citation>
    <scope>NUCLEOTIDE SEQUENCE [LARGE SCALE GENOMIC DNA]</scope>
    <source>
        <strain>NZ131</strain>
    </source>
</reference>
<protein>
    <recommendedName>
        <fullName evidence="1">Ribonuclease Z</fullName>
        <shortName evidence="1">RNase Z</shortName>
        <ecNumber evidence="1">3.1.26.11</ecNumber>
    </recommendedName>
    <alternativeName>
        <fullName evidence="1">tRNA 3 endonuclease</fullName>
    </alternativeName>
    <alternativeName>
        <fullName evidence="1">tRNase Z</fullName>
    </alternativeName>
</protein>
<evidence type="ECO:0000255" key="1">
    <source>
        <dbReference type="HAMAP-Rule" id="MF_01818"/>
    </source>
</evidence>
<name>RNZ_STRPZ</name>
<accession>B5XL36</accession>
<organism>
    <name type="scientific">Streptococcus pyogenes serotype M49 (strain NZ131)</name>
    <dbReference type="NCBI Taxonomy" id="471876"/>
    <lineage>
        <taxon>Bacteria</taxon>
        <taxon>Bacillati</taxon>
        <taxon>Bacillota</taxon>
        <taxon>Bacilli</taxon>
        <taxon>Lactobacillales</taxon>
        <taxon>Streptococcaceae</taxon>
        <taxon>Streptococcus</taxon>
    </lineage>
</organism>